<keyword id="KW-0961">Cell wall biogenesis/degradation</keyword>
<keyword id="KW-0548">Nucleotidyltransferase</keyword>
<keyword id="KW-0777">Teichoic acid biosynthesis</keyword>
<keyword id="KW-0808">Transferase</keyword>
<proteinExistence type="inferred from homology"/>
<evidence type="ECO:0000255" key="1">
    <source>
        <dbReference type="HAMAP-Rule" id="MF_02068"/>
    </source>
</evidence>
<feature type="chain" id="PRO_0000237823" description="Ribitol-5-phosphate cytidylyltransferase 1">
    <location>
        <begin position="1"/>
        <end position="238"/>
    </location>
</feature>
<feature type="binding site" evidence="1">
    <location>
        <begin position="7"/>
        <end position="10"/>
    </location>
    <ligand>
        <name>CTP</name>
        <dbReference type="ChEBI" id="CHEBI:37563"/>
    </ligand>
</feature>
<feature type="binding site" evidence="1">
    <location>
        <begin position="81"/>
        <end position="87"/>
    </location>
    <ligand>
        <name>CTP</name>
        <dbReference type="ChEBI" id="CHEBI:37563"/>
    </ligand>
</feature>
<feature type="site" description="Transition state stabilizer" evidence="1">
    <location>
        <position position="14"/>
    </location>
</feature>
<feature type="site" description="Transition state stabilizer" evidence="1">
    <location>
        <position position="22"/>
    </location>
</feature>
<feature type="site" description="Positions ribitol 5-phosphate for the nucleophilic attack" evidence="1">
    <location>
        <position position="160"/>
    </location>
</feature>
<feature type="site" description="Positions ribitol 5-phosphate for the nucleophilic attack" evidence="1">
    <location>
        <position position="217"/>
    </location>
</feature>
<comment type="function">
    <text evidence="1">Catalyzes the transfer of the cytidylyl group of CTP to D-ribitol 5-phosphate.</text>
</comment>
<comment type="catalytic activity">
    <reaction evidence="1">
        <text>D-ribitol 5-phosphate + CTP + H(+) = CDP-L-ribitol + diphosphate</text>
        <dbReference type="Rhea" id="RHEA:12456"/>
        <dbReference type="ChEBI" id="CHEBI:15378"/>
        <dbReference type="ChEBI" id="CHEBI:33019"/>
        <dbReference type="ChEBI" id="CHEBI:37563"/>
        <dbReference type="ChEBI" id="CHEBI:57608"/>
        <dbReference type="ChEBI" id="CHEBI:57695"/>
        <dbReference type="EC" id="2.7.7.40"/>
    </reaction>
</comment>
<comment type="pathway">
    <text evidence="1">Cell wall biogenesis; poly(ribitol phosphate) teichoic acid biosynthesis.</text>
</comment>
<comment type="similarity">
    <text evidence="1">Belongs to the IspD/TarI cytidylyltransferase family. TarI subfamily.</text>
</comment>
<gene>
    <name evidence="1" type="primary">tarI1</name>
    <name type="ordered locus">SAB0194</name>
</gene>
<accession>Q2YV73</accession>
<protein>
    <recommendedName>
        <fullName evidence="1">Ribitol-5-phosphate cytidylyltransferase 1</fullName>
        <ecNumber evidence="1">2.7.7.40</ecNumber>
    </recommendedName>
</protein>
<dbReference type="EC" id="2.7.7.40" evidence="1"/>
<dbReference type="EMBL" id="AJ938182">
    <property type="protein sequence ID" value="CAI79882.1"/>
    <property type="molecule type" value="Genomic_DNA"/>
</dbReference>
<dbReference type="RefSeq" id="WP_000872484.1">
    <property type="nucleotide sequence ID" value="NC_007622.1"/>
</dbReference>
<dbReference type="SMR" id="Q2YV73"/>
<dbReference type="KEGG" id="sab:SAB0194"/>
<dbReference type="HOGENOM" id="CLU_061281_2_3_9"/>
<dbReference type="UniPathway" id="UPA00790"/>
<dbReference type="GO" id="GO:0050518">
    <property type="term" value="F:2-C-methyl-D-erythritol 4-phosphate cytidylyltransferase activity"/>
    <property type="evidence" value="ECO:0007669"/>
    <property type="project" value="TreeGrafter"/>
</dbReference>
<dbReference type="GO" id="GO:0047349">
    <property type="term" value="F:D-ribitol-5-phosphate cytidylyltransferase activity"/>
    <property type="evidence" value="ECO:0007669"/>
    <property type="project" value="UniProtKB-UniRule"/>
</dbReference>
<dbReference type="GO" id="GO:0071555">
    <property type="term" value="P:cell wall organization"/>
    <property type="evidence" value="ECO:0007669"/>
    <property type="project" value="UniProtKB-KW"/>
</dbReference>
<dbReference type="GO" id="GO:0008299">
    <property type="term" value="P:isoprenoid biosynthetic process"/>
    <property type="evidence" value="ECO:0007669"/>
    <property type="project" value="InterPro"/>
</dbReference>
<dbReference type="GO" id="GO:1902012">
    <property type="term" value="P:poly(ribitol phosphate) teichoic acid biosynthetic process"/>
    <property type="evidence" value="ECO:0007669"/>
    <property type="project" value="UniProtKB-UniRule"/>
</dbReference>
<dbReference type="CDD" id="cd02516">
    <property type="entry name" value="CDP-ME_synthetase"/>
    <property type="match status" value="1"/>
</dbReference>
<dbReference type="FunFam" id="3.90.550.10:FF:000003">
    <property type="entry name" value="2-C-methyl-D-erythritol 4-phosphate cytidylyltransferase"/>
    <property type="match status" value="1"/>
</dbReference>
<dbReference type="Gene3D" id="3.90.550.10">
    <property type="entry name" value="Spore Coat Polysaccharide Biosynthesis Protein SpsA, Chain A"/>
    <property type="match status" value="1"/>
</dbReference>
<dbReference type="HAMAP" id="MF_02068">
    <property type="entry name" value="TarI"/>
    <property type="match status" value="1"/>
</dbReference>
<dbReference type="InterPro" id="IPR034683">
    <property type="entry name" value="IspD/TarI"/>
</dbReference>
<dbReference type="InterPro" id="IPR050088">
    <property type="entry name" value="IspD/TarI_cytidylyltransf_bact"/>
</dbReference>
<dbReference type="InterPro" id="IPR018294">
    <property type="entry name" value="ISPD_synthase_CS"/>
</dbReference>
<dbReference type="InterPro" id="IPR029044">
    <property type="entry name" value="Nucleotide-diphossugar_trans"/>
</dbReference>
<dbReference type="InterPro" id="IPR034709">
    <property type="entry name" value="TarI"/>
</dbReference>
<dbReference type="NCBIfam" id="NF001183">
    <property type="entry name" value="PRK00155.1-3"/>
    <property type="match status" value="1"/>
</dbReference>
<dbReference type="NCBIfam" id="NF009924">
    <property type="entry name" value="PRK13385.1"/>
    <property type="match status" value="1"/>
</dbReference>
<dbReference type="PANTHER" id="PTHR32125">
    <property type="entry name" value="2-C-METHYL-D-ERYTHRITOL 4-PHOSPHATE CYTIDYLYLTRANSFERASE, CHLOROPLASTIC"/>
    <property type="match status" value="1"/>
</dbReference>
<dbReference type="PANTHER" id="PTHR32125:SF8">
    <property type="entry name" value="RIBITOL-5-PHOSPHATE CYTIDYLYLTRANSFERASE"/>
    <property type="match status" value="1"/>
</dbReference>
<dbReference type="Pfam" id="PF01128">
    <property type="entry name" value="IspD"/>
    <property type="match status" value="1"/>
</dbReference>
<dbReference type="SUPFAM" id="SSF53448">
    <property type="entry name" value="Nucleotide-diphospho-sugar transferases"/>
    <property type="match status" value="1"/>
</dbReference>
<dbReference type="PROSITE" id="PS01295">
    <property type="entry name" value="ISPD"/>
    <property type="match status" value="1"/>
</dbReference>
<reference key="1">
    <citation type="journal article" date="2007" name="PLoS ONE">
        <title>Molecular correlates of host specialization in Staphylococcus aureus.</title>
        <authorList>
            <person name="Herron-Olson L."/>
            <person name="Fitzgerald J.R."/>
            <person name="Musser J.M."/>
            <person name="Kapur V."/>
        </authorList>
    </citation>
    <scope>NUCLEOTIDE SEQUENCE [LARGE SCALE GENOMIC DNA]</scope>
    <source>
        <strain>bovine RF122 / ET3-1</strain>
    </source>
</reference>
<sequence>MKYAGILAGGIGSRMGNVPLPKQFLDLDNKPILIHTLEKFILINDFEKIIIATPQQWMTHTKDTLRKFKISDERIEVIQGGSDRNDTIMNIVKHIESTNGINDDDVIVTHDAVRPFLTHRIIKENIQAALEYGAVDTVIDAIDTIVTSKDDQTIDAIPVRNEMYQGQTPQSFNINLLKESYAQLSDEQKSILSDACKIIVETNKPVRLVKGELYNIKVTTPYDLKVANAIIRGGIADD</sequence>
<organism>
    <name type="scientific">Staphylococcus aureus (strain bovine RF122 / ET3-1)</name>
    <dbReference type="NCBI Taxonomy" id="273036"/>
    <lineage>
        <taxon>Bacteria</taxon>
        <taxon>Bacillati</taxon>
        <taxon>Bacillota</taxon>
        <taxon>Bacilli</taxon>
        <taxon>Bacillales</taxon>
        <taxon>Staphylococcaceae</taxon>
        <taxon>Staphylococcus</taxon>
    </lineage>
</organism>
<name>TARI1_STAAB</name>